<accession>Q5ZK84</accession>
<dbReference type="EC" id="1.1.1.2" evidence="2"/>
<dbReference type="EC" id="1.6.-.-" evidence="2"/>
<dbReference type="EMBL" id="AJ720200">
    <property type="protein sequence ID" value="CAG31859.1"/>
    <property type="molecule type" value="mRNA"/>
</dbReference>
<dbReference type="RefSeq" id="NP_001006539.1">
    <property type="nucleotide sequence ID" value="NM_001006539.3"/>
</dbReference>
<dbReference type="SMR" id="Q5ZK84"/>
<dbReference type="FunCoup" id="Q5ZK84">
    <property type="interactions" value="2431"/>
</dbReference>
<dbReference type="STRING" id="9031.ENSGALP00000016630"/>
<dbReference type="GlyGen" id="Q5ZK84">
    <property type="glycosylation" value="1 site"/>
</dbReference>
<dbReference type="PaxDb" id="9031-ENSGALP00000016630"/>
<dbReference type="GeneID" id="424599"/>
<dbReference type="KEGG" id="gga:424599"/>
<dbReference type="CTD" id="10327"/>
<dbReference type="VEuPathDB" id="HostDB:geneid_424599"/>
<dbReference type="eggNOG" id="KOG1577">
    <property type="taxonomic scope" value="Eukaryota"/>
</dbReference>
<dbReference type="InParanoid" id="Q5ZK84"/>
<dbReference type="OMA" id="MVNQIFL"/>
<dbReference type="OrthoDB" id="416253at2759"/>
<dbReference type="PhylomeDB" id="Q5ZK84"/>
<dbReference type="PRO" id="PR:Q5ZK84"/>
<dbReference type="Proteomes" id="UP000000539">
    <property type="component" value="Unassembled WGS sequence"/>
</dbReference>
<dbReference type="GO" id="GO:0016324">
    <property type="term" value="C:apical plasma membrane"/>
    <property type="evidence" value="ECO:0000250"/>
    <property type="project" value="UniProtKB"/>
</dbReference>
<dbReference type="GO" id="GO:0005829">
    <property type="term" value="C:cytosol"/>
    <property type="evidence" value="ECO:0000250"/>
    <property type="project" value="UniProtKB"/>
</dbReference>
<dbReference type="GO" id="GO:0004032">
    <property type="term" value="F:aldose reductase (NADPH) activity"/>
    <property type="evidence" value="ECO:0000318"/>
    <property type="project" value="GO_Central"/>
</dbReference>
<dbReference type="GO" id="GO:0160163">
    <property type="term" value="F:S-nitrosoglutathione reductase (NADPH) activity"/>
    <property type="evidence" value="ECO:0007669"/>
    <property type="project" value="RHEA"/>
</dbReference>
<dbReference type="GO" id="GO:0046185">
    <property type="term" value="P:aldehyde catabolic process"/>
    <property type="evidence" value="ECO:0007669"/>
    <property type="project" value="InterPro"/>
</dbReference>
<dbReference type="GO" id="GO:0110095">
    <property type="term" value="P:cellular detoxification of aldehyde"/>
    <property type="evidence" value="ECO:0000250"/>
    <property type="project" value="UniProtKB"/>
</dbReference>
<dbReference type="GO" id="GO:0006629">
    <property type="term" value="P:lipid metabolic process"/>
    <property type="evidence" value="ECO:0007669"/>
    <property type="project" value="UniProtKB-KW"/>
</dbReference>
<dbReference type="CDD" id="cd19106">
    <property type="entry name" value="AKR_AKR1A1-4"/>
    <property type="match status" value="1"/>
</dbReference>
<dbReference type="FunFam" id="3.20.20.100:FF:000006">
    <property type="entry name" value="Aldo-keto reductase family 1 member A1"/>
    <property type="match status" value="1"/>
</dbReference>
<dbReference type="Gene3D" id="3.20.20.100">
    <property type="entry name" value="NADP-dependent oxidoreductase domain"/>
    <property type="match status" value="1"/>
</dbReference>
<dbReference type="InterPro" id="IPR020471">
    <property type="entry name" value="AKR"/>
</dbReference>
<dbReference type="InterPro" id="IPR044481">
    <property type="entry name" value="AKR1A"/>
</dbReference>
<dbReference type="InterPro" id="IPR018170">
    <property type="entry name" value="Aldo/ket_reductase_CS"/>
</dbReference>
<dbReference type="InterPro" id="IPR023210">
    <property type="entry name" value="NADP_OxRdtase_dom"/>
</dbReference>
<dbReference type="InterPro" id="IPR036812">
    <property type="entry name" value="NADP_OxRdtase_dom_sf"/>
</dbReference>
<dbReference type="PANTHER" id="PTHR11732">
    <property type="entry name" value="ALDO/KETO REDUCTASE"/>
    <property type="match status" value="1"/>
</dbReference>
<dbReference type="Pfam" id="PF00248">
    <property type="entry name" value="Aldo_ket_red"/>
    <property type="match status" value="1"/>
</dbReference>
<dbReference type="PIRSF" id="PIRSF000097">
    <property type="entry name" value="AKR"/>
    <property type="match status" value="1"/>
</dbReference>
<dbReference type="PRINTS" id="PR00069">
    <property type="entry name" value="ALDKETRDTASE"/>
</dbReference>
<dbReference type="SUPFAM" id="SSF51430">
    <property type="entry name" value="NAD(P)-linked oxidoreductase"/>
    <property type="match status" value="1"/>
</dbReference>
<dbReference type="PROSITE" id="PS00798">
    <property type="entry name" value="ALDOKETO_REDUCTASE_1"/>
    <property type="match status" value="1"/>
</dbReference>
<dbReference type="PROSITE" id="PS00062">
    <property type="entry name" value="ALDOKETO_REDUCTASE_2"/>
    <property type="match status" value="1"/>
</dbReference>
<dbReference type="PROSITE" id="PS00063">
    <property type="entry name" value="ALDOKETO_REDUCTASE_3"/>
    <property type="match status" value="1"/>
</dbReference>
<organism>
    <name type="scientific">Gallus gallus</name>
    <name type="common">Chicken</name>
    <dbReference type="NCBI Taxonomy" id="9031"/>
    <lineage>
        <taxon>Eukaryota</taxon>
        <taxon>Metazoa</taxon>
        <taxon>Chordata</taxon>
        <taxon>Craniata</taxon>
        <taxon>Vertebrata</taxon>
        <taxon>Euteleostomi</taxon>
        <taxon>Archelosauria</taxon>
        <taxon>Archosauria</taxon>
        <taxon>Dinosauria</taxon>
        <taxon>Saurischia</taxon>
        <taxon>Theropoda</taxon>
        <taxon>Coelurosauria</taxon>
        <taxon>Aves</taxon>
        <taxon>Neognathae</taxon>
        <taxon>Galloanserae</taxon>
        <taxon>Galliformes</taxon>
        <taxon>Phasianidae</taxon>
        <taxon>Phasianinae</taxon>
        <taxon>Gallus</taxon>
    </lineage>
</organism>
<gene>
    <name type="primary">AKR1A1</name>
    <name type="ORF">RCJMB04_12g8</name>
</gene>
<keyword id="KW-1003">Cell membrane</keyword>
<keyword id="KW-0963">Cytoplasm</keyword>
<keyword id="KW-0443">Lipid metabolism</keyword>
<keyword id="KW-0472">Membrane</keyword>
<keyword id="KW-0521">NADP</keyword>
<keyword id="KW-0560">Oxidoreductase</keyword>
<keyword id="KW-1185">Reference proteome</keyword>
<sequence length="327" mass="37077">MSAGCDFVALYNGQKIPLIGLGTWKSEPGQVKEAVKYALSVGYRHVDCAAAYSNEAEIGDAFQECVGPNKVIKREDLFVTSKLWNTKHHPEDVEPALRKTLADLKLDYLDLYLMHWPHAFERGDNLFPKNPDGTMRYDYTDYKDTWKAMEKLVEKGLAKAIGLSNFNSRQIDDVLSVATVKPAVLQVECHPYLAQNELIAHCQKRGLVVTAYSPLGSPDRMWKHPDEPVLLEEPGIKKLAEKYKKSPAQILLRWQAQRKVVTIPKSVTPARILQNLQVFDFSLTEEEMSHVGSLNKNWRYIVPMLTVNGKPVPRDAGHPNYPFNDPY</sequence>
<reference key="1">
    <citation type="journal article" date="2005" name="Genome Biol.">
        <title>Full-length cDNAs from chicken bursal lymphocytes to facilitate gene function analysis.</title>
        <authorList>
            <person name="Caldwell R.B."/>
            <person name="Kierzek A.M."/>
            <person name="Arakawa H."/>
            <person name="Bezzubov Y."/>
            <person name="Zaim J."/>
            <person name="Fiedler P."/>
            <person name="Kutter S."/>
            <person name="Blagodatski A."/>
            <person name="Kostovska D."/>
            <person name="Koter M."/>
            <person name="Plachy J."/>
            <person name="Carninci P."/>
            <person name="Hayashizaki Y."/>
            <person name="Buerstedde J.-M."/>
        </authorList>
    </citation>
    <scope>NUCLEOTIDE SEQUENCE [LARGE SCALE MRNA]</scope>
    <source>
        <strain>CB</strain>
        <tissue>Bursa of Fabricius</tissue>
    </source>
</reference>
<name>AK1A1_CHICK</name>
<comment type="function">
    <text evidence="2 3 4">Catalyzes the NADPH-dependent reduction of a wide variety of carbonyl-containing compounds to their corresponding alcohols. Displays enzymatic activity towards endogenous metabolites such as aromatic and aliphatic aldehydes, ketones, monosaccharides and bile acids. Acts as an aldehyde-detoxification enzyme (By similarity). Also acts as an inhibitor of protein S-nitrosylation by mediating degradation of S-nitroso-coenzyme A (S-nitroso-CoA), a cofactor required to S-nitrosylate proteins (By similarity). Also acts as a S-nitroso-glutathione reductase by catalyzing the NADPH-dependent reduction of S-nitrosoglutathione (By similarity). Displays no reductase activity towards retinoids (By similarity).</text>
</comment>
<comment type="catalytic activity">
    <reaction evidence="2">
        <text>a primary alcohol + NADP(+) = an aldehyde + NADPH + H(+)</text>
        <dbReference type="Rhea" id="RHEA:15937"/>
        <dbReference type="ChEBI" id="CHEBI:15378"/>
        <dbReference type="ChEBI" id="CHEBI:15734"/>
        <dbReference type="ChEBI" id="CHEBI:17478"/>
        <dbReference type="ChEBI" id="CHEBI:57783"/>
        <dbReference type="ChEBI" id="CHEBI:58349"/>
        <dbReference type="EC" id="1.1.1.2"/>
    </reaction>
</comment>
<comment type="catalytic activity">
    <reaction evidence="2">
        <text>S-nitroso-CoA + NADPH + H(+) = sulfinamide-CoA + NADP(+)</text>
        <dbReference type="Rhea" id="RHEA:78375"/>
        <dbReference type="ChEBI" id="CHEBI:15378"/>
        <dbReference type="ChEBI" id="CHEBI:57783"/>
        <dbReference type="ChEBI" id="CHEBI:58349"/>
        <dbReference type="ChEBI" id="CHEBI:145546"/>
        <dbReference type="ChEBI" id="CHEBI:145548"/>
    </reaction>
    <physiologicalReaction direction="left-to-right" evidence="2">
        <dbReference type="Rhea" id="RHEA:78376"/>
    </physiologicalReaction>
</comment>
<comment type="catalytic activity">
    <reaction evidence="5">
        <text>S-nitrosoglutathione + NADPH + H(+) = S-(hydroxysulfenamide)glutathione + NADP(+)</text>
        <dbReference type="Rhea" id="RHEA:63500"/>
        <dbReference type="ChEBI" id="CHEBI:15378"/>
        <dbReference type="ChEBI" id="CHEBI:57783"/>
        <dbReference type="ChEBI" id="CHEBI:58349"/>
        <dbReference type="ChEBI" id="CHEBI:145544"/>
        <dbReference type="ChEBI" id="CHEBI:229723"/>
    </reaction>
</comment>
<comment type="subcellular location">
    <subcellularLocation>
        <location evidence="5">Cytoplasm</location>
        <location evidence="5">Cytosol</location>
    </subcellularLocation>
    <subcellularLocation>
        <location evidence="5">Apical cell membrane</location>
    </subcellularLocation>
</comment>
<comment type="similarity">
    <text evidence="6">Belongs to the aldo/keto reductase family.</text>
</comment>
<evidence type="ECO:0000250" key="1">
    <source>
        <dbReference type="UniProtKB" id="O60218"/>
    </source>
</evidence>
<evidence type="ECO:0000250" key="2">
    <source>
        <dbReference type="UniProtKB" id="P14550"/>
    </source>
</evidence>
<evidence type="ECO:0000250" key="3">
    <source>
        <dbReference type="UniProtKB" id="P50578"/>
    </source>
</evidence>
<evidence type="ECO:0000250" key="4">
    <source>
        <dbReference type="UniProtKB" id="P51635"/>
    </source>
</evidence>
<evidence type="ECO:0000250" key="5">
    <source>
        <dbReference type="UniProtKB" id="Q9JII6"/>
    </source>
</evidence>
<evidence type="ECO:0000305" key="6"/>
<protein>
    <recommendedName>
        <fullName>Aldo-keto reductase family 1 member A1</fullName>
        <ecNumber evidence="2">1.1.1.2</ecNumber>
    </recommendedName>
    <alternativeName>
        <fullName>Alcohol dehydrogenase [NADP(+)]</fullName>
    </alternativeName>
    <alternativeName>
        <fullName>Aldehyde reductase</fullName>
    </alternativeName>
    <alternativeName>
        <fullName evidence="6">S-nitroso-CoA reductase</fullName>
        <shortName evidence="6">ScorR</shortName>
        <ecNumber evidence="2">1.6.-.-</ecNumber>
    </alternativeName>
</protein>
<proteinExistence type="evidence at transcript level"/>
<feature type="chain" id="PRO_0000384151" description="Aldo-keto reductase family 1 member A1">
    <location>
        <begin position="1"/>
        <end position="327"/>
    </location>
</feature>
<feature type="active site" description="Proton donor" evidence="2">
    <location>
        <position position="52"/>
    </location>
</feature>
<feature type="binding site" evidence="1">
    <location>
        <begin position="13"/>
        <end position="22"/>
    </location>
    <ligand>
        <name>NADP(+)</name>
        <dbReference type="ChEBI" id="CHEBI:58349"/>
    </ligand>
</feature>
<feature type="binding site" evidence="3">
    <location>
        <position position="23"/>
    </location>
    <ligand>
        <name>NADP(+)</name>
        <dbReference type="ChEBI" id="CHEBI:58349"/>
    </ligand>
</feature>
<feature type="binding site" evidence="3">
    <location>
        <position position="24"/>
    </location>
    <ligand>
        <name>NADP(+)</name>
        <dbReference type="ChEBI" id="CHEBI:58349"/>
    </ligand>
</feature>
<feature type="binding site" evidence="3">
    <location>
        <position position="47"/>
    </location>
    <ligand>
        <name>NADP(+)</name>
        <dbReference type="ChEBI" id="CHEBI:58349"/>
    </ligand>
</feature>
<feature type="binding site" evidence="3">
    <location>
        <position position="164"/>
    </location>
    <ligand>
        <name>NADP(+)</name>
        <dbReference type="ChEBI" id="CHEBI:58349"/>
    </ligand>
</feature>
<feature type="binding site" evidence="3">
    <location>
        <position position="165"/>
    </location>
    <ligand>
        <name>NADP(+)</name>
        <dbReference type="ChEBI" id="CHEBI:58349"/>
    </ligand>
</feature>
<feature type="binding site" evidence="3">
    <location>
        <position position="213"/>
    </location>
    <ligand>
        <name>NADP(+)</name>
        <dbReference type="ChEBI" id="CHEBI:58349"/>
    </ligand>
</feature>
<feature type="binding site" evidence="3">
    <location>
        <position position="215"/>
    </location>
    <ligand>
        <name>NADP(+)</name>
        <dbReference type="ChEBI" id="CHEBI:58349"/>
    </ligand>
</feature>
<feature type="binding site" evidence="3">
    <location>
        <position position="217"/>
    </location>
    <ligand>
        <name>NADP(+)</name>
        <dbReference type="ChEBI" id="CHEBI:58349"/>
    </ligand>
</feature>
<feature type="binding site" evidence="3">
    <location>
        <position position="265"/>
    </location>
    <ligand>
        <name>NADP(+)</name>
        <dbReference type="ChEBI" id="CHEBI:58349"/>
    </ligand>
</feature>
<feature type="binding site" evidence="3">
    <location>
        <position position="266"/>
    </location>
    <ligand>
        <name>NADP(+)</name>
        <dbReference type="ChEBI" id="CHEBI:58349"/>
    </ligand>
</feature>
<feature type="binding site" evidence="3">
    <location>
        <position position="267"/>
    </location>
    <ligand>
        <name>NADP(+)</name>
        <dbReference type="ChEBI" id="CHEBI:58349"/>
    </ligand>
</feature>
<feature type="binding site" evidence="3">
    <location>
        <position position="268"/>
    </location>
    <ligand>
        <name>NADP(+)</name>
        <dbReference type="ChEBI" id="CHEBI:58349"/>
    </ligand>
</feature>
<feature type="binding site" evidence="3">
    <location>
        <position position="271"/>
    </location>
    <ligand>
        <name>NADP(+)</name>
        <dbReference type="ChEBI" id="CHEBI:58349"/>
    </ligand>
</feature>
<feature type="binding site" evidence="3">
    <location>
        <position position="274"/>
    </location>
    <ligand>
        <name>NADP(+)</name>
        <dbReference type="ChEBI" id="CHEBI:58349"/>
    </ligand>
</feature>
<feature type="binding site" evidence="3">
    <location>
        <position position="275"/>
    </location>
    <ligand>
        <name>NADP(+)</name>
        <dbReference type="ChEBI" id="CHEBI:58349"/>
    </ligand>
</feature>
<feature type="site" description="Lowers pKa of active site Tyr" evidence="2">
    <location>
        <position position="82"/>
    </location>
</feature>